<reference key="1">
    <citation type="submission" date="2006-09" db="EMBL/GenBank/DDBJ databases">
        <authorList>
            <consortium name="The Klebsiella pneumonia Genome Sequencing Project"/>
            <person name="McClelland M."/>
            <person name="Sanderson E.K."/>
            <person name="Spieth J."/>
            <person name="Clifton W.S."/>
            <person name="Latreille P."/>
            <person name="Sabo A."/>
            <person name="Pepin K."/>
            <person name="Bhonagiri V."/>
            <person name="Porwollik S."/>
            <person name="Ali J."/>
            <person name="Wilson R.K."/>
        </authorList>
    </citation>
    <scope>NUCLEOTIDE SEQUENCE [LARGE SCALE GENOMIC DNA]</scope>
    <source>
        <strain>ATCC 700721 / MGH 78578</strain>
    </source>
</reference>
<name>ARAB_KLEP7</name>
<dbReference type="EC" id="2.7.1.16" evidence="1"/>
<dbReference type="EMBL" id="CP000647">
    <property type="protein sequence ID" value="ABR75522.1"/>
    <property type="molecule type" value="Genomic_DNA"/>
</dbReference>
<dbReference type="RefSeq" id="WP_011977646.1">
    <property type="nucleotide sequence ID" value="NC_009648.1"/>
</dbReference>
<dbReference type="SMR" id="A6T4K1"/>
<dbReference type="STRING" id="272620.KPN_00062"/>
<dbReference type="PaxDb" id="272620-KPN_00062"/>
<dbReference type="EnsemblBacteria" id="ABR75522">
    <property type="protein sequence ID" value="ABR75522"/>
    <property type="gene ID" value="KPN_00062"/>
</dbReference>
<dbReference type="KEGG" id="kpn:KPN_00062"/>
<dbReference type="HOGENOM" id="CLU_009281_9_1_6"/>
<dbReference type="UniPathway" id="UPA00145">
    <property type="reaction ID" value="UER00566"/>
</dbReference>
<dbReference type="Proteomes" id="UP000000265">
    <property type="component" value="Chromosome"/>
</dbReference>
<dbReference type="GO" id="GO:0005737">
    <property type="term" value="C:cytoplasm"/>
    <property type="evidence" value="ECO:0007669"/>
    <property type="project" value="TreeGrafter"/>
</dbReference>
<dbReference type="GO" id="GO:0005524">
    <property type="term" value="F:ATP binding"/>
    <property type="evidence" value="ECO:0007669"/>
    <property type="project" value="UniProtKB-KW"/>
</dbReference>
<dbReference type="GO" id="GO:0019150">
    <property type="term" value="F:D-ribulokinase activity"/>
    <property type="evidence" value="ECO:0007669"/>
    <property type="project" value="TreeGrafter"/>
</dbReference>
<dbReference type="GO" id="GO:0008741">
    <property type="term" value="F:ribulokinase activity"/>
    <property type="evidence" value="ECO:0007669"/>
    <property type="project" value="UniProtKB-UniRule"/>
</dbReference>
<dbReference type="GO" id="GO:0019569">
    <property type="term" value="P:L-arabinose catabolic process to xylulose 5-phosphate"/>
    <property type="evidence" value="ECO:0007669"/>
    <property type="project" value="UniProtKB-UniRule"/>
</dbReference>
<dbReference type="CDD" id="cd07781">
    <property type="entry name" value="ASKHA_NBD_FGGY_L-RBK"/>
    <property type="match status" value="1"/>
</dbReference>
<dbReference type="Gene3D" id="1.20.58.2240">
    <property type="match status" value="1"/>
</dbReference>
<dbReference type="Gene3D" id="3.30.420.40">
    <property type="match status" value="1"/>
</dbReference>
<dbReference type="HAMAP" id="MF_00520">
    <property type="entry name" value="Ribulokinase"/>
    <property type="match status" value="1"/>
</dbReference>
<dbReference type="InterPro" id="IPR043129">
    <property type="entry name" value="ATPase_NBD"/>
</dbReference>
<dbReference type="InterPro" id="IPR018485">
    <property type="entry name" value="FGGY_C"/>
</dbReference>
<dbReference type="InterPro" id="IPR005929">
    <property type="entry name" value="Ribulokinase"/>
</dbReference>
<dbReference type="NCBIfam" id="TIGR01234">
    <property type="entry name" value="L-ribulokinase"/>
    <property type="match status" value="1"/>
</dbReference>
<dbReference type="NCBIfam" id="NF003154">
    <property type="entry name" value="PRK04123.1"/>
    <property type="match status" value="1"/>
</dbReference>
<dbReference type="PANTHER" id="PTHR43435:SF4">
    <property type="entry name" value="FGGY CARBOHYDRATE KINASE DOMAIN-CONTAINING PROTEIN"/>
    <property type="match status" value="1"/>
</dbReference>
<dbReference type="PANTHER" id="PTHR43435">
    <property type="entry name" value="RIBULOKINASE"/>
    <property type="match status" value="1"/>
</dbReference>
<dbReference type="Pfam" id="PF02782">
    <property type="entry name" value="FGGY_C"/>
    <property type="match status" value="1"/>
</dbReference>
<dbReference type="SUPFAM" id="SSF53067">
    <property type="entry name" value="Actin-like ATPase domain"/>
    <property type="match status" value="2"/>
</dbReference>
<gene>
    <name evidence="1" type="primary">araB</name>
    <name type="ordered locus">KPN78578_00610</name>
    <name type="ORF">KPN_00062</name>
</gene>
<protein>
    <recommendedName>
        <fullName evidence="1">Ribulokinase</fullName>
        <ecNumber evidence="1">2.7.1.16</ecNumber>
    </recommendedName>
</protein>
<organism>
    <name type="scientific">Klebsiella pneumoniae subsp. pneumoniae (strain ATCC 700721 / MGH 78578)</name>
    <dbReference type="NCBI Taxonomy" id="272620"/>
    <lineage>
        <taxon>Bacteria</taxon>
        <taxon>Pseudomonadati</taxon>
        <taxon>Pseudomonadota</taxon>
        <taxon>Gammaproteobacteria</taxon>
        <taxon>Enterobacterales</taxon>
        <taxon>Enterobacteriaceae</taxon>
        <taxon>Klebsiella/Raoultella group</taxon>
        <taxon>Klebsiella</taxon>
        <taxon>Klebsiella pneumoniae complex</taxon>
    </lineage>
</organism>
<proteinExistence type="inferred from homology"/>
<feature type="chain" id="PRO_1000050912" description="Ribulokinase">
    <location>
        <begin position="1"/>
        <end position="569"/>
    </location>
</feature>
<keyword id="KW-0054">Arabinose catabolism</keyword>
<keyword id="KW-0067">ATP-binding</keyword>
<keyword id="KW-0119">Carbohydrate metabolism</keyword>
<keyword id="KW-0418">Kinase</keyword>
<keyword id="KW-0547">Nucleotide-binding</keyword>
<keyword id="KW-0808">Transferase</keyword>
<comment type="catalytic activity">
    <reaction evidence="1">
        <text>D-ribulose + ATP = D-ribulose 5-phosphate + ADP + H(+)</text>
        <dbReference type="Rhea" id="RHEA:17601"/>
        <dbReference type="ChEBI" id="CHEBI:15378"/>
        <dbReference type="ChEBI" id="CHEBI:17173"/>
        <dbReference type="ChEBI" id="CHEBI:30616"/>
        <dbReference type="ChEBI" id="CHEBI:58121"/>
        <dbReference type="ChEBI" id="CHEBI:456216"/>
        <dbReference type="EC" id="2.7.1.16"/>
    </reaction>
</comment>
<comment type="catalytic activity">
    <reaction evidence="1">
        <text>L-ribulose + ATP = L-ribulose 5-phosphate + ADP + H(+)</text>
        <dbReference type="Rhea" id="RHEA:22072"/>
        <dbReference type="ChEBI" id="CHEBI:15378"/>
        <dbReference type="ChEBI" id="CHEBI:16880"/>
        <dbReference type="ChEBI" id="CHEBI:30616"/>
        <dbReference type="ChEBI" id="CHEBI:58226"/>
        <dbReference type="ChEBI" id="CHEBI:456216"/>
        <dbReference type="EC" id="2.7.1.16"/>
    </reaction>
</comment>
<comment type="pathway">
    <text evidence="1">Carbohydrate degradation; L-arabinose degradation via L-ribulose; D-xylulose 5-phosphate from L-arabinose (bacterial route): step 2/3.</text>
</comment>
<comment type="similarity">
    <text evidence="1">Belongs to the ribulokinase family.</text>
</comment>
<evidence type="ECO:0000255" key="1">
    <source>
        <dbReference type="HAMAP-Rule" id="MF_00520"/>
    </source>
</evidence>
<accession>A6T4K1</accession>
<sequence length="569" mass="61619">MAIAIGLDFGSDSVRALAVECASGAELATSVEWYPRWREGQYCDGANNRFRHHPRDYIESMEAALKSVLASLSAEQRADVVGIGVDSTGSTPAPVDAEGNVLALREEFADNPNAMFVLWKDHTAVEEAEAITRLCHQPGKEDYSRYIGGIYSSEWFWAKILHVTREDSAVAQAAASWVELCDWVPALLSGTTRPQDLRRGRCSAGHKSLWHESWGGLPPASFFDELDPIINQHLAWPLFTDTWTADVPVGTLSAEWAQRLGLSQSVAISGGAFDCHMGAVGAGAQPNALVKVIGTSTCDILIADKESVGERTVKGICGQVDGSVVPHFIGMEAGQSAFGDIYAWFGRILGWPLEQLAQQQPALREQIKASQKQLLPALTEAWANNPSLEHLPVVLDWFNGRRTPNANQRLKGVITDLNLATDAPALFGGLIAATAFGARAIMECFTEQGIPVNNVMALGGIARKNQVIMQACCDVLNRPLQIVASDQCCALGAAIFAAVAAGVYDDIPAAQQRMASQVETTLQPRPAQAQRFEQLYQRYQQWSVSAEQHYLPSAAKAEKAPQSQAALTH</sequence>